<feature type="chain" id="PRO_0000177684" description="Peptide chain release factor 1">
    <location>
        <begin position="1"/>
        <end position="362"/>
    </location>
</feature>
<feature type="modified residue" description="N5-methylglutamine" evidence="1">
    <location>
        <position position="236"/>
    </location>
</feature>
<comment type="function">
    <text evidence="1">Peptide chain release factor 1 directs the termination of translation in response to the peptide chain termination codons UAG and UAA.</text>
</comment>
<comment type="subcellular location">
    <subcellularLocation>
        <location evidence="1">Cytoplasm</location>
    </subcellularLocation>
</comment>
<comment type="PTM">
    <text evidence="1">Methylated by PrmC. Methylation increases the termination efficiency of RF1.</text>
</comment>
<comment type="similarity">
    <text evidence="1">Belongs to the prokaryotic/mitochondrial release factor family.</text>
</comment>
<evidence type="ECO:0000255" key="1">
    <source>
        <dbReference type="HAMAP-Rule" id="MF_00093"/>
    </source>
</evidence>
<name>RF1_LACJO</name>
<dbReference type="EMBL" id="AE017198">
    <property type="protein sequence ID" value="AAS08751.1"/>
    <property type="molecule type" value="Genomic_DNA"/>
</dbReference>
<dbReference type="RefSeq" id="WP_004894139.1">
    <property type="nucleotide sequence ID" value="NC_005362.1"/>
</dbReference>
<dbReference type="SMR" id="Q74K25"/>
<dbReference type="GeneID" id="83570637"/>
<dbReference type="KEGG" id="ljo:LJ_0930"/>
<dbReference type="eggNOG" id="COG0216">
    <property type="taxonomic scope" value="Bacteria"/>
</dbReference>
<dbReference type="HOGENOM" id="CLU_036856_0_1_9"/>
<dbReference type="Proteomes" id="UP000000581">
    <property type="component" value="Chromosome"/>
</dbReference>
<dbReference type="GO" id="GO:0005737">
    <property type="term" value="C:cytoplasm"/>
    <property type="evidence" value="ECO:0007669"/>
    <property type="project" value="UniProtKB-SubCell"/>
</dbReference>
<dbReference type="GO" id="GO:0016149">
    <property type="term" value="F:translation release factor activity, codon specific"/>
    <property type="evidence" value="ECO:0007669"/>
    <property type="project" value="UniProtKB-UniRule"/>
</dbReference>
<dbReference type="FunFam" id="3.30.160.20:FF:000004">
    <property type="entry name" value="Peptide chain release factor 1"/>
    <property type="match status" value="1"/>
</dbReference>
<dbReference type="FunFam" id="3.30.70.1660:FF:000002">
    <property type="entry name" value="Peptide chain release factor 1"/>
    <property type="match status" value="1"/>
</dbReference>
<dbReference type="FunFam" id="3.30.70.1660:FF:000004">
    <property type="entry name" value="Peptide chain release factor 1"/>
    <property type="match status" value="1"/>
</dbReference>
<dbReference type="Gene3D" id="3.30.160.20">
    <property type="match status" value="1"/>
</dbReference>
<dbReference type="Gene3D" id="3.30.70.1660">
    <property type="match status" value="1"/>
</dbReference>
<dbReference type="Gene3D" id="6.10.140.1950">
    <property type="match status" value="1"/>
</dbReference>
<dbReference type="HAMAP" id="MF_00093">
    <property type="entry name" value="Rel_fac_1"/>
    <property type="match status" value="1"/>
</dbReference>
<dbReference type="InterPro" id="IPR005139">
    <property type="entry name" value="PCRF"/>
</dbReference>
<dbReference type="InterPro" id="IPR000352">
    <property type="entry name" value="Pep_chain_release_fac_I"/>
</dbReference>
<dbReference type="InterPro" id="IPR045853">
    <property type="entry name" value="Pep_chain_release_fac_I_sf"/>
</dbReference>
<dbReference type="InterPro" id="IPR050057">
    <property type="entry name" value="Prokaryotic/Mito_RF"/>
</dbReference>
<dbReference type="InterPro" id="IPR004373">
    <property type="entry name" value="RF-1"/>
</dbReference>
<dbReference type="NCBIfam" id="TIGR00019">
    <property type="entry name" value="prfA"/>
    <property type="match status" value="1"/>
</dbReference>
<dbReference type="NCBIfam" id="NF001859">
    <property type="entry name" value="PRK00591.1"/>
    <property type="match status" value="1"/>
</dbReference>
<dbReference type="PANTHER" id="PTHR43804">
    <property type="entry name" value="LD18447P"/>
    <property type="match status" value="1"/>
</dbReference>
<dbReference type="PANTHER" id="PTHR43804:SF7">
    <property type="entry name" value="LD18447P"/>
    <property type="match status" value="1"/>
</dbReference>
<dbReference type="Pfam" id="PF03462">
    <property type="entry name" value="PCRF"/>
    <property type="match status" value="1"/>
</dbReference>
<dbReference type="Pfam" id="PF00472">
    <property type="entry name" value="RF-1"/>
    <property type="match status" value="1"/>
</dbReference>
<dbReference type="SMART" id="SM00937">
    <property type="entry name" value="PCRF"/>
    <property type="match status" value="1"/>
</dbReference>
<dbReference type="SUPFAM" id="SSF75620">
    <property type="entry name" value="Release factor"/>
    <property type="match status" value="1"/>
</dbReference>
<dbReference type="PROSITE" id="PS00745">
    <property type="entry name" value="RF_PROK_I"/>
    <property type="match status" value="1"/>
</dbReference>
<organism>
    <name type="scientific">Lactobacillus johnsonii (strain CNCM I-12250 / La1 / NCC 533)</name>
    <dbReference type="NCBI Taxonomy" id="257314"/>
    <lineage>
        <taxon>Bacteria</taxon>
        <taxon>Bacillati</taxon>
        <taxon>Bacillota</taxon>
        <taxon>Bacilli</taxon>
        <taxon>Lactobacillales</taxon>
        <taxon>Lactobacillaceae</taxon>
        <taxon>Lactobacillus</taxon>
    </lineage>
</organism>
<sequence length="362" mass="41599">MDKVMAQLEGLVAHYEELQEMMADPEVINDTKRYMEISKEEADMREVVQKYRKYKSDIKEIDDNKEIISTESDNDLVEMAKEENSELEKEVAELEDEIKILMLPKDPNDDKDIIMEIRGAAGGDEASLFAGDLLRMYEKYAETQGWKVSLIDSEPTEVGGYKRVAVMITGDKVYSKLKYENGAHRVQRVPVTESQGRVHTSTATVAVMPEYEQVDIDLDPKDIRVDVYRSSGAGGQHINKTSSAVRMTHLPTGIVVAMQDQRSQQQNREKAMQILKSRVYDYYESQNRDQYDAKRKESVGTGDRSERIRTYNYPQNRVTDHRIGLTLNKLDRIMNGELDEIINALVLYYQTQQLEKMAEENA</sequence>
<protein>
    <recommendedName>
        <fullName evidence="1">Peptide chain release factor 1</fullName>
        <shortName evidence="1">RF-1</shortName>
    </recommendedName>
</protein>
<keyword id="KW-0963">Cytoplasm</keyword>
<keyword id="KW-0488">Methylation</keyword>
<keyword id="KW-0648">Protein biosynthesis</keyword>
<proteinExistence type="inferred from homology"/>
<reference key="1">
    <citation type="journal article" date="2004" name="Proc. Natl. Acad. Sci. U.S.A.">
        <title>The genome sequence of the probiotic intestinal bacterium Lactobacillus johnsonii NCC 533.</title>
        <authorList>
            <person name="Pridmore R.D."/>
            <person name="Berger B."/>
            <person name="Desiere F."/>
            <person name="Vilanova D."/>
            <person name="Barretto C."/>
            <person name="Pittet A.-C."/>
            <person name="Zwahlen M.-C."/>
            <person name="Rouvet M."/>
            <person name="Altermann E."/>
            <person name="Barrangou R."/>
            <person name="Mollet B."/>
            <person name="Mercenier A."/>
            <person name="Klaenhammer T."/>
            <person name="Arigoni F."/>
            <person name="Schell M.A."/>
        </authorList>
    </citation>
    <scope>NUCLEOTIDE SEQUENCE [LARGE SCALE GENOMIC DNA]</scope>
    <source>
        <strain>CNCM I-1225 / La1 / NCC 533</strain>
    </source>
</reference>
<gene>
    <name evidence="1" type="primary">prfA</name>
    <name type="ordered locus">LJ_0930</name>
</gene>
<accession>Q74K25</accession>